<comment type="function">
    <text evidence="1">This protein is one of the early assembly proteins of the 50S ribosomal subunit, although it is not seen to bind rRNA by itself. It is important during the early stages of 50S assembly.</text>
</comment>
<comment type="subunit">
    <text evidence="1">Part of the 50S ribosomal subunit.</text>
</comment>
<comment type="similarity">
    <text evidence="1">Belongs to the universal ribosomal protein uL13 family.</text>
</comment>
<name>RL13_GEOKA</name>
<gene>
    <name evidence="1" type="primary">rplM</name>
    <name type="ordered locus">GK0139</name>
</gene>
<dbReference type="EMBL" id="BA000043">
    <property type="protein sequence ID" value="BAD74424.1"/>
    <property type="molecule type" value="Genomic_DNA"/>
</dbReference>
<dbReference type="RefSeq" id="WP_011229651.1">
    <property type="nucleotide sequence ID" value="NC_006510.1"/>
</dbReference>
<dbReference type="SMR" id="Q5L3Q6"/>
<dbReference type="STRING" id="235909.GK0139"/>
<dbReference type="GeneID" id="32062127"/>
<dbReference type="KEGG" id="gka:GK0139"/>
<dbReference type="eggNOG" id="COG0102">
    <property type="taxonomic scope" value="Bacteria"/>
</dbReference>
<dbReference type="HOGENOM" id="CLU_082184_2_2_9"/>
<dbReference type="Proteomes" id="UP000001172">
    <property type="component" value="Chromosome"/>
</dbReference>
<dbReference type="GO" id="GO:0022625">
    <property type="term" value="C:cytosolic large ribosomal subunit"/>
    <property type="evidence" value="ECO:0007669"/>
    <property type="project" value="TreeGrafter"/>
</dbReference>
<dbReference type="GO" id="GO:0003729">
    <property type="term" value="F:mRNA binding"/>
    <property type="evidence" value="ECO:0007669"/>
    <property type="project" value="TreeGrafter"/>
</dbReference>
<dbReference type="GO" id="GO:0003735">
    <property type="term" value="F:structural constituent of ribosome"/>
    <property type="evidence" value="ECO:0007669"/>
    <property type="project" value="InterPro"/>
</dbReference>
<dbReference type="GO" id="GO:0017148">
    <property type="term" value="P:negative regulation of translation"/>
    <property type="evidence" value="ECO:0007669"/>
    <property type="project" value="TreeGrafter"/>
</dbReference>
<dbReference type="GO" id="GO:0006412">
    <property type="term" value="P:translation"/>
    <property type="evidence" value="ECO:0007669"/>
    <property type="project" value="UniProtKB-UniRule"/>
</dbReference>
<dbReference type="CDD" id="cd00392">
    <property type="entry name" value="Ribosomal_L13"/>
    <property type="match status" value="1"/>
</dbReference>
<dbReference type="FunFam" id="3.90.1180.10:FF:000001">
    <property type="entry name" value="50S ribosomal protein L13"/>
    <property type="match status" value="1"/>
</dbReference>
<dbReference type="Gene3D" id="3.90.1180.10">
    <property type="entry name" value="Ribosomal protein L13"/>
    <property type="match status" value="1"/>
</dbReference>
<dbReference type="HAMAP" id="MF_01366">
    <property type="entry name" value="Ribosomal_uL13"/>
    <property type="match status" value="1"/>
</dbReference>
<dbReference type="InterPro" id="IPR005822">
    <property type="entry name" value="Ribosomal_uL13"/>
</dbReference>
<dbReference type="InterPro" id="IPR005823">
    <property type="entry name" value="Ribosomal_uL13_bac-type"/>
</dbReference>
<dbReference type="InterPro" id="IPR023563">
    <property type="entry name" value="Ribosomal_uL13_CS"/>
</dbReference>
<dbReference type="InterPro" id="IPR036899">
    <property type="entry name" value="Ribosomal_uL13_sf"/>
</dbReference>
<dbReference type="NCBIfam" id="TIGR01066">
    <property type="entry name" value="rplM_bact"/>
    <property type="match status" value="1"/>
</dbReference>
<dbReference type="PANTHER" id="PTHR11545:SF2">
    <property type="entry name" value="LARGE RIBOSOMAL SUBUNIT PROTEIN UL13M"/>
    <property type="match status" value="1"/>
</dbReference>
<dbReference type="PANTHER" id="PTHR11545">
    <property type="entry name" value="RIBOSOMAL PROTEIN L13"/>
    <property type="match status" value="1"/>
</dbReference>
<dbReference type="Pfam" id="PF00572">
    <property type="entry name" value="Ribosomal_L13"/>
    <property type="match status" value="1"/>
</dbReference>
<dbReference type="PIRSF" id="PIRSF002181">
    <property type="entry name" value="Ribosomal_L13"/>
    <property type="match status" value="1"/>
</dbReference>
<dbReference type="SUPFAM" id="SSF52161">
    <property type="entry name" value="Ribosomal protein L13"/>
    <property type="match status" value="1"/>
</dbReference>
<dbReference type="PROSITE" id="PS00783">
    <property type="entry name" value="RIBOSOMAL_L13"/>
    <property type="match status" value="1"/>
</dbReference>
<reference key="1">
    <citation type="journal article" date="2004" name="Nucleic Acids Res.">
        <title>Thermoadaptation trait revealed by the genome sequence of thermophilic Geobacillus kaustophilus.</title>
        <authorList>
            <person name="Takami H."/>
            <person name="Takaki Y."/>
            <person name="Chee G.-J."/>
            <person name="Nishi S."/>
            <person name="Shimamura S."/>
            <person name="Suzuki H."/>
            <person name="Matsui S."/>
            <person name="Uchiyama I."/>
        </authorList>
    </citation>
    <scope>NUCLEOTIDE SEQUENCE [LARGE SCALE GENOMIC DNA]</scope>
    <source>
        <strain>HTA426</strain>
    </source>
</reference>
<feature type="chain" id="PRO_0000261728" description="Large ribosomal subunit protein uL13">
    <location>
        <begin position="1"/>
        <end position="145"/>
    </location>
</feature>
<proteinExistence type="inferred from homology"/>
<evidence type="ECO:0000255" key="1">
    <source>
        <dbReference type="HAMAP-Rule" id="MF_01366"/>
    </source>
</evidence>
<evidence type="ECO:0000305" key="2"/>
<keyword id="KW-1185">Reference proteome</keyword>
<keyword id="KW-0687">Ribonucleoprotein</keyword>
<keyword id="KW-0689">Ribosomal protein</keyword>
<organism>
    <name type="scientific">Geobacillus kaustophilus (strain HTA426)</name>
    <dbReference type="NCBI Taxonomy" id="235909"/>
    <lineage>
        <taxon>Bacteria</taxon>
        <taxon>Bacillati</taxon>
        <taxon>Bacillota</taxon>
        <taxon>Bacilli</taxon>
        <taxon>Bacillales</taxon>
        <taxon>Anoxybacillaceae</taxon>
        <taxon>Geobacillus</taxon>
        <taxon>Geobacillus thermoleovorans group</taxon>
    </lineage>
</organism>
<protein>
    <recommendedName>
        <fullName evidence="1">Large ribosomal subunit protein uL13</fullName>
    </recommendedName>
    <alternativeName>
        <fullName evidence="2">50S ribosomal protein L13</fullName>
    </alternativeName>
</protein>
<accession>Q5L3Q6</accession>
<sequence length="145" mass="16601">MRTTYMAKPNEVERKWYVVDAAGKTLGRLASEVAALLRGKHKPTFTPHVDCGDHVIVINADKVELTGKKLTKKLYYRHSLYPGGLKVRTALEMRTNYPEQMIERAVRGMLPKGSLGRQMFKKLHVYRGSEHPHQAQKPEVYELRG</sequence>